<feature type="chain" id="PRO_0000444314" description="L-ornithine N(5)-monooxygenase">
    <location>
        <begin position="1"/>
        <end position="587"/>
    </location>
</feature>
<feature type="region of interest" description="Disordered" evidence="3">
    <location>
        <begin position="488"/>
        <end position="511"/>
    </location>
</feature>
<feature type="compositionally biased region" description="Polar residues" evidence="3">
    <location>
        <begin position="491"/>
        <end position="505"/>
    </location>
</feature>
<feature type="binding site" evidence="1">
    <location>
        <begin position="53"/>
        <end position="61"/>
    </location>
    <ligand>
        <name>FAD</name>
        <dbReference type="ChEBI" id="CHEBI:57692"/>
    </ligand>
</feature>
<feature type="binding site" evidence="1">
    <location>
        <position position="72"/>
    </location>
    <ligand>
        <name>FAD</name>
        <dbReference type="ChEBI" id="CHEBI:57692"/>
    </ligand>
</feature>
<feature type="binding site" evidence="1">
    <location>
        <position position="77"/>
    </location>
    <ligand>
        <name>substrate</name>
    </ligand>
</feature>
<feature type="binding site" evidence="1">
    <location>
        <begin position="235"/>
        <end position="238"/>
    </location>
    <ligand>
        <name>NADP(+)</name>
        <dbReference type="ChEBI" id="CHEBI:58349"/>
    </ligand>
</feature>
<feature type="binding site" evidence="1">
    <location>
        <begin position="282"/>
        <end position="285"/>
    </location>
    <ligand>
        <name>substrate</name>
    </ligand>
</feature>
<feature type="binding site" evidence="1">
    <location>
        <begin position="312"/>
        <end position="314"/>
    </location>
    <ligand>
        <name>NADP(+)</name>
        <dbReference type="ChEBI" id="CHEBI:58349"/>
    </ligand>
</feature>
<feature type="binding site" evidence="1">
    <location>
        <position position="312"/>
    </location>
    <ligand>
        <name>substrate</name>
    </ligand>
</feature>
<feature type="binding site" evidence="1">
    <location>
        <begin position="567"/>
        <end position="569"/>
    </location>
    <ligand>
        <name>FAD</name>
        <dbReference type="ChEBI" id="CHEBI:57692"/>
    </ligand>
</feature>
<feature type="binding site" evidence="1">
    <location>
        <position position="570"/>
    </location>
    <ligand>
        <name>substrate</name>
    </ligand>
</feature>
<protein>
    <recommendedName>
        <fullName evidence="5">L-ornithine N(5)-monooxygenase</fullName>
        <shortName evidence="2">OMO</shortName>
        <ecNumber evidence="7">1.14.13.196</ecNumber>
    </recommendedName>
    <alternativeName>
        <fullName evidence="5">Ferrichrome A biosynthesis protein omo1</fullName>
    </alternativeName>
    <alternativeName>
        <fullName evidence="6">L-ornithine N(5)-oxygenase</fullName>
    </alternativeName>
    <alternativeName>
        <fullName evidence="5">Siderophore biosynthesis protein omo1</fullName>
    </alternativeName>
</protein>
<gene>
    <name evidence="5" type="primary">omo1</name>
</gene>
<keyword id="KW-0274">FAD</keyword>
<keyword id="KW-0285">Flavoprotein</keyword>
<keyword id="KW-0503">Monooxygenase</keyword>
<keyword id="KW-0521">NADP</keyword>
<keyword id="KW-0560">Oxidoreductase</keyword>
<accession>Q52UT0</accession>
<comment type="function">
    <text evidence="4">L-ornithine N(5)-monooxygenase; part of the siderophore biosynthetic pathway (PubMed:16019163). Omphalotus olearius produces ferrichrome A, but no other siderophore has been detected (PubMed:16019163). Ferrichrome A consists of a hexapeptide ring made up of one glycine, two serine, and three N(5)-hydroxyornithine amino acid residues, the latter acylated by trans-(alpha-methyl)-glutaconic acid residues (PubMed:16019163). The biosynthesis of ferrichrome A depends on the hydroxylation of ornithine to N(5)-hydroxyornithine, catalyzed by the monooxygenase omo1 (PubMed:16019163). The second step, the acylation of N(5)-hydroxy-L-ornithine is probably catalyzed by the N-acyltransferase ato1 (PubMed:16019163). Finally, assembly of ferrichrome A is catalyzed by the nonribosomal peptide synthase (NRPS) fso1 (PubMed:16019163).</text>
</comment>
<comment type="catalytic activity">
    <reaction evidence="1">
        <text>L-ornithine + NADPH + O2 = N(5)-hydroxy-L-ornithine + NADP(+) + H2O</text>
        <dbReference type="Rhea" id="RHEA:41508"/>
        <dbReference type="ChEBI" id="CHEBI:15377"/>
        <dbReference type="ChEBI" id="CHEBI:15379"/>
        <dbReference type="ChEBI" id="CHEBI:46911"/>
        <dbReference type="ChEBI" id="CHEBI:57783"/>
        <dbReference type="ChEBI" id="CHEBI:58349"/>
        <dbReference type="ChEBI" id="CHEBI:78275"/>
        <dbReference type="EC" id="1.14.13.196"/>
    </reaction>
</comment>
<comment type="catalytic activity">
    <reaction evidence="1">
        <text>L-ornithine + NADH + O2 = N(5)-hydroxy-L-ornithine + NAD(+) + H2O</text>
        <dbReference type="Rhea" id="RHEA:41512"/>
        <dbReference type="ChEBI" id="CHEBI:15377"/>
        <dbReference type="ChEBI" id="CHEBI:15379"/>
        <dbReference type="ChEBI" id="CHEBI:46911"/>
        <dbReference type="ChEBI" id="CHEBI:57540"/>
        <dbReference type="ChEBI" id="CHEBI:57945"/>
        <dbReference type="ChEBI" id="CHEBI:78275"/>
        <dbReference type="EC" id="1.14.13.196"/>
    </reaction>
</comment>
<comment type="cofactor">
    <cofactor evidence="1">
        <name>FAD</name>
        <dbReference type="ChEBI" id="CHEBI:57692"/>
    </cofactor>
    <text evidence="1">Binds 1 FAD per subunit.</text>
</comment>
<comment type="pathway">
    <text evidence="7">Siderophore biosynthesis; ferrichrome biosynthesis.</text>
</comment>
<comment type="subunit">
    <text evidence="1">Homotetramer.</text>
</comment>
<comment type="similarity">
    <text evidence="6">Belongs to the lysine N(6)-hydroxylase/L-ornithine N(5)-oxygenase family.</text>
</comment>
<organism>
    <name type="scientific">Omphalotus olearius</name>
    <name type="common">Jack o'lantern</name>
    <dbReference type="NCBI Taxonomy" id="72120"/>
    <lineage>
        <taxon>Eukaryota</taxon>
        <taxon>Fungi</taxon>
        <taxon>Dikarya</taxon>
        <taxon>Basidiomycota</taxon>
        <taxon>Agaricomycotina</taxon>
        <taxon>Agaricomycetes</taxon>
        <taxon>Agaricomycetidae</taxon>
        <taxon>Agaricales</taxon>
        <taxon>Marasmiineae</taxon>
        <taxon>Omphalotaceae</taxon>
        <taxon>Omphalotus</taxon>
    </lineage>
</organism>
<name>SIDA_OMPOL</name>
<sequence>MSQMSITSQVIYDLVGLGFGPSNVAIAGALVDKWASPNSDAKSRSFQNVLFIEKHTSFQWHPGMLIPGAQMQISFLKDLATLRSPQSPITFLNYLHSQNRLASFINRGSTTPSRKEYADYLGWAARYVQDHGVKVNYGQEVIAIDEDADGLIGITSKDVTTNEIYTYKTRNLVISPGGSPRIPLTIAPLMNEPSVINDSTVLHSSAYLTSVDRLFQSLTRSSSSRRPFKIAVVGGGQSAAEVSLNLRERLSSIAFEGSVGHQVDMIIGRGSLKPSDDTPFSNEVFDPMTTDTWFGSSQHNRDRMITEYKPTNYSVVNPRTINAVRHVSPSLIYDQKVDDAIAARTLEDKTSGTSPARINIRANMRIVSLKYDDKNSTDSSSSPTTKSSSAFTLTLQNTHTPHTLHASAYDAIICATGYQRTGWIDMFKRSKRLGKHFGIGAEGAARVKLVPLDKRQRVDVDTLFDETAISSDVSSTASSSLYSVSGSDNSAASGVSGASTPLTSPSEEEGKSDVNLYISRRYRLLPVSTSSYEKTKTRDDDASEGVKMKARIYVQGVEEMTHGLSDTLLSVIGPRAGEVVEDLFAEE</sequence>
<evidence type="ECO:0000250" key="1">
    <source>
        <dbReference type="UniProtKB" id="E9QYP0"/>
    </source>
</evidence>
<evidence type="ECO:0000250" key="2">
    <source>
        <dbReference type="UniProtKB" id="G5EB76"/>
    </source>
</evidence>
<evidence type="ECO:0000256" key="3">
    <source>
        <dbReference type="SAM" id="MobiDB-lite"/>
    </source>
</evidence>
<evidence type="ECO:0000269" key="4">
    <source>
    </source>
</evidence>
<evidence type="ECO:0000303" key="5">
    <source>
    </source>
</evidence>
<evidence type="ECO:0000305" key="6"/>
<evidence type="ECO:0000305" key="7">
    <source>
    </source>
</evidence>
<dbReference type="EC" id="1.14.13.196" evidence="7"/>
<dbReference type="EMBL" id="AY929617">
    <property type="protein sequence ID" value="AAX49355.1"/>
    <property type="molecule type" value="Genomic_DNA"/>
</dbReference>
<dbReference type="SMR" id="Q52UT0"/>
<dbReference type="UniPathway" id="UPA00783"/>
<dbReference type="GO" id="GO:0031172">
    <property type="term" value="F:ornithine N5-monooxygenase activity"/>
    <property type="evidence" value="ECO:0007669"/>
    <property type="project" value="RHEA"/>
</dbReference>
<dbReference type="GO" id="GO:0031169">
    <property type="term" value="P:ferrichrome biosynthetic process"/>
    <property type="evidence" value="ECO:0007669"/>
    <property type="project" value="UniProtKB-UniPathway"/>
</dbReference>
<dbReference type="GO" id="GO:0006879">
    <property type="term" value="P:intracellular iron ion homeostasis"/>
    <property type="evidence" value="ECO:0007669"/>
    <property type="project" value="TreeGrafter"/>
</dbReference>
<dbReference type="Gene3D" id="3.50.50.60">
    <property type="entry name" value="FAD/NAD(P)-binding domain"/>
    <property type="match status" value="1"/>
</dbReference>
<dbReference type="InterPro" id="IPR036188">
    <property type="entry name" value="FAD/NAD-bd_sf"/>
</dbReference>
<dbReference type="InterPro" id="IPR025700">
    <property type="entry name" value="Lys/Orn_oxygenase"/>
</dbReference>
<dbReference type="PANTHER" id="PTHR42802:SF1">
    <property type="entry name" value="L-ORNITHINE N(5)-MONOOXYGENASE"/>
    <property type="match status" value="1"/>
</dbReference>
<dbReference type="PANTHER" id="PTHR42802">
    <property type="entry name" value="MONOOXYGENASE"/>
    <property type="match status" value="1"/>
</dbReference>
<dbReference type="Pfam" id="PF13434">
    <property type="entry name" value="Lys_Orn_oxgnase"/>
    <property type="match status" value="1"/>
</dbReference>
<dbReference type="SUPFAM" id="SSF51905">
    <property type="entry name" value="FAD/NAD(P)-binding domain"/>
    <property type="match status" value="1"/>
</dbReference>
<proteinExistence type="evidence at transcript level"/>
<reference key="1">
    <citation type="journal article" date="2005" name="FEMS Microbiol. Lett.">
        <title>Characterization of the ferrichrome A biosynthetic gene cluster in the homobasidiomycete Omphalotus olearius.</title>
        <authorList>
            <person name="Welzel K."/>
            <person name="Eisfeld K."/>
            <person name="Antelo L."/>
            <person name="Anke T."/>
            <person name="Anke H."/>
        </authorList>
    </citation>
    <scope>NUCLEOTIDE SEQUENCE [GENOMIC DNA]</scope>
    <scope>FUNCTION</scope>
    <scope>INDUCTION</scope>
    <source>
        <strain>TA90170</strain>
    </source>
</reference>